<dbReference type="EC" id="3.5.1.18" evidence="1"/>
<dbReference type="EMBL" id="CP000514">
    <property type="protein sequence ID" value="ABM19629.1"/>
    <property type="molecule type" value="Genomic_DNA"/>
</dbReference>
<dbReference type="RefSeq" id="WP_011786013.1">
    <property type="nucleotide sequence ID" value="NC_008740.1"/>
</dbReference>
<dbReference type="SMR" id="A1U3R0"/>
<dbReference type="STRING" id="351348.Maqu_2554"/>
<dbReference type="KEGG" id="maq:Maqu_2554"/>
<dbReference type="eggNOG" id="COG0624">
    <property type="taxonomic scope" value="Bacteria"/>
</dbReference>
<dbReference type="HOGENOM" id="CLU_021802_4_0_6"/>
<dbReference type="OrthoDB" id="9809784at2"/>
<dbReference type="UniPathway" id="UPA00034">
    <property type="reaction ID" value="UER00021"/>
</dbReference>
<dbReference type="Proteomes" id="UP000000998">
    <property type="component" value="Chromosome"/>
</dbReference>
<dbReference type="GO" id="GO:0008777">
    <property type="term" value="F:acetylornithine deacetylase activity"/>
    <property type="evidence" value="ECO:0007669"/>
    <property type="project" value="TreeGrafter"/>
</dbReference>
<dbReference type="GO" id="GO:0050897">
    <property type="term" value="F:cobalt ion binding"/>
    <property type="evidence" value="ECO:0007669"/>
    <property type="project" value="UniProtKB-UniRule"/>
</dbReference>
<dbReference type="GO" id="GO:0009014">
    <property type="term" value="F:succinyl-diaminopimelate desuccinylase activity"/>
    <property type="evidence" value="ECO:0007669"/>
    <property type="project" value="UniProtKB-UniRule"/>
</dbReference>
<dbReference type="GO" id="GO:0008270">
    <property type="term" value="F:zinc ion binding"/>
    <property type="evidence" value="ECO:0007669"/>
    <property type="project" value="UniProtKB-UniRule"/>
</dbReference>
<dbReference type="GO" id="GO:0019877">
    <property type="term" value="P:diaminopimelate biosynthetic process"/>
    <property type="evidence" value="ECO:0007669"/>
    <property type="project" value="UniProtKB-UniRule"/>
</dbReference>
<dbReference type="GO" id="GO:0006526">
    <property type="term" value="P:L-arginine biosynthetic process"/>
    <property type="evidence" value="ECO:0007669"/>
    <property type="project" value="TreeGrafter"/>
</dbReference>
<dbReference type="GO" id="GO:0009089">
    <property type="term" value="P:lysine biosynthetic process via diaminopimelate"/>
    <property type="evidence" value="ECO:0007669"/>
    <property type="project" value="UniProtKB-UniRule"/>
</dbReference>
<dbReference type="CDD" id="cd03891">
    <property type="entry name" value="M20_DapE_proteobac"/>
    <property type="match status" value="1"/>
</dbReference>
<dbReference type="FunFam" id="3.30.70.360:FF:000011">
    <property type="entry name" value="Succinyl-diaminopimelate desuccinylase"/>
    <property type="match status" value="1"/>
</dbReference>
<dbReference type="FunFam" id="3.40.630.10:FF:000005">
    <property type="entry name" value="Succinyl-diaminopimelate desuccinylase"/>
    <property type="match status" value="1"/>
</dbReference>
<dbReference type="Gene3D" id="3.40.630.10">
    <property type="entry name" value="Zn peptidases"/>
    <property type="match status" value="2"/>
</dbReference>
<dbReference type="HAMAP" id="MF_01690">
    <property type="entry name" value="DapE"/>
    <property type="match status" value="1"/>
</dbReference>
<dbReference type="InterPro" id="IPR001261">
    <property type="entry name" value="ArgE/DapE_CS"/>
</dbReference>
<dbReference type="InterPro" id="IPR036264">
    <property type="entry name" value="Bact_exopeptidase_dim_dom"/>
</dbReference>
<dbReference type="InterPro" id="IPR005941">
    <property type="entry name" value="DapE_proteobac"/>
</dbReference>
<dbReference type="InterPro" id="IPR002933">
    <property type="entry name" value="Peptidase_M20"/>
</dbReference>
<dbReference type="InterPro" id="IPR011650">
    <property type="entry name" value="Peptidase_M20_dimer"/>
</dbReference>
<dbReference type="InterPro" id="IPR050072">
    <property type="entry name" value="Peptidase_M20A"/>
</dbReference>
<dbReference type="NCBIfam" id="TIGR01246">
    <property type="entry name" value="dapE_proteo"/>
    <property type="match status" value="1"/>
</dbReference>
<dbReference type="NCBIfam" id="NF009557">
    <property type="entry name" value="PRK13009.1"/>
    <property type="match status" value="1"/>
</dbReference>
<dbReference type="PANTHER" id="PTHR43808">
    <property type="entry name" value="ACETYLORNITHINE DEACETYLASE"/>
    <property type="match status" value="1"/>
</dbReference>
<dbReference type="PANTHER" id="PTHR43808:SF31">
    <property type="entry name" value="N-ACETYL-L-CITRULLINE DEACETYLASE"/>
    <property type="match status" value="1"/>
</dbReference>
<dbReference type="Pfam" id="PF07687">
    <property type="entry name" value="M20_dimer"/>
    <property type="match status" value="1"/>
</dbReference>
<dbReference type="Pfam" id="PF01546">
    <property type="entry name" value="Peptidase_M20"/>
    <property type="match status" value="1"/>
</dbReference>
<dbReference type="SUPFAM" id="SSF55031">
    <property type="entry name" value="Bacterial exopeptidase dimerisation domain"/>
    <property type="match status" value="1"/>
</dbReference>
<dbReference type="SUPFAM" id="SSF53187">
    <property type="entry name" value="Zn-dependent exopeptidases"/>
    <property type="match status" value="1"/>
</dbReference>
<dbReference type="PROSITE" id="PS00758">
    <property type="entry name" value="ARGE_DAPE_CPG2_1"/>
    <property type="match status" value="1"/>
</dbReference>
<dbReference type="PROSITE" id="PS00759">
    <property type="entry name" value="ARGE_DAPE_CPG2_2"/>
    <property type="match status" value="1"/>
</dbReference>
<gene>
    <name evidence="1" type="primary">dapE</name>
    <name type="ordered locus">Maqu_2554</name>
</gene>
<organism>
    <name type="scientific">Marinobacter nauticus (strain ATCC 700491 / DSM 11845 / VT8)</name>
    <name type="common">Marinobacter aquaeolei</name>
    <dbReference type="NCBI Taxonomy" id="351348"/>
    <lineage>
        <taxon>Bacteria</taxon>
        <taxon>Pseudomonadati</taxon>
        <taxon>Pseudomonadota</taxon>
        <taxon>Gammaproteobacteria</taxon>
        <taxon>Pseudomonadales</taxon>
        <taxon>Marinobacteraceae</taxon>
        <taxon>Marinobacter</taxon>
    </lineage>
</organism>
<feature type="chain" id="PRO_0000375607" description="Succinyl-diaminopimelate desuccinylase">
    <location>
        <begin position="1"/>
        <end position="376"/>
    </location>
</feature>
<feature type="active site" evidence="1">
    <location>
        <position position="70"/>
    </location>
</feature>
<feature type="active site" description="Proton acceptor" evidence="1">
    <location>
        <position position="135"/>
    </location>
</feature>
<feature type="binding site" evidence="1">
    <location>
        <position position="68"/>
    </location>
    <ligand>
        <name>Zn(2+)</name>
        <dbReference type="ChEBI" id="CHEBI:29105"/>
        <label>1</label>
    </ligand>
</feature>
<feature type="binding site" evidence="1">
    <location>
        <position position="101"/>
    </location>
    <ligand>
        <name>Zn(2+)</name>
        <dbReference type="ChEBI" id="CHEBI:29105"/>
        <label>1</label>
    </ligand>
</feature>
<feature type="binding site" evidence="1">
    <location>
        <position position="101"/>
    </location>
    <ligand>
        <name>Zn(2+)</name>
        <dbReference type="ChEBI" id="CHEBI:29105"/>
        <label>2</label>
    </ligand>
</feature>
<feature type="binding site" evidence="1">
    <location>
        <position position="136"/>
    </location>
    <ligand>
        <name>Zn(2+)</name>
        <dbReference type="ChEBI" id="CHEBI:29105"/>
        <label>2</label>
    </ligand>
</feature>
<feature type="binding site" evidence="1">
    <location>
        <position position="164"/>
    </location>
    <ligand>
        <name>Zn(2+)</name>
        <dbReference type="ChEBI" id="CHEBI:29105"/>
        <label>1</label>
    </ligand>
</feature>
<feature type="binding site" evidence="1">
    <location>
        <position position="349"/>
    </location>
    <ligand>
        <name>Zn(2+)</name>
        <dbReference type="ChEBI" id="CHEBI:29105"/>
        <label>2</label>
    </ligand>
</feature>
<evidence type="ECO:0000255" key="1">
    <source>
        <dbReference type="HAMAP-Rule" id="MF_01690"/>
    </source>
</evidence>
<sequence>MSLSPTLELAKDLIRRQSVTPDDAGCQELMMSRLAPLGFSGENLRFGETDNLWARKGNNGPVLAFAGHTDVVPTGPEKNWAHPPFDPIIKDGYLHGRGAADMKGSLAAFITACERFVANHPNHRGSIALLITSDEEGPAQDGTVKVVETLEARNEKMDWCLIGEPSSTHQVGDVIKNGRRGSLHGYLTVRGVQGHVAYPHLAENAVHNVAPALDALAKEFWDNGNDFFPPTTFQITRVEAGVGSNIVPGECLVHFNFRYCTENTAESLEERVVAILDRHNLKYDLQWHLSGRPFLTDKGALVSAAQNAIRTVTGRETELSTSGGTSDGRFIAPTGAQVVELGPINATIHKVDECVKAEDLDTLSEIYEQILVELLA</sequence>
<keyword id="KW-0028">Amino-acid biosynthesis</keyword>
<keyword id="KW-0170">Cobalt</keyword>
<keyword id="KW-0220">Diaminopimelate biosynthesis</keyword>
<keyword id="KW-0378">Hydrolase</keyword>
<keyword id="KW-0457">Lysine biosynthesis</keyword>
<keyword id="KW-0479">Metal-binding</keyword>
<keyword id="KW-0862">Zinc</keyword>
<protein>
    <recommendedName>
        <fullName evidence="1">Succinyl-diaminopimelate desuccinylase</fullName>
        <shortName evidence="1">SDAP desuccinylase</shortName>
        <ecNumber evidence="1">3.5.1.18</ecNumber>
    </recommendedName>
    <alternativeName>
        <fullName evidence="1">N-succinyl-LL-2,6-diaminoheptanedioate amidohydrolase</fullName>
    </alternativeName>
</protein>
<comment type="function">
    <text evidence="1">Catalyzes the hydrolysis of N-succinyl-L,L-diaminopimelic acid (SDAP), forming succinate and LL-2,6-diaminopimelate (DAP), an intermediate involved in the bacterial biosynthesis of lysine and meso-diaminopimelic acid, an essential component of bacterial cell walls.</text>
</comment>
<comment type="catalytic activity">
    <reaction evidence="1">
        <text>N-succinyl-(2S,6S)-2,6-diaminopimelate + H2O = (2S,6S)-2,6-diaminopimelate + succinate</text>
        <dbReference type="Rhea" id="RHEA:22608"/>
        <dbReference type="ChEBI" id="CHEBI:15377"/>
        <dbReference type="ChEBI" id="CHEBI:30031"/>
        <dbReference type="ChEBI" id="CHEBI:57609"/>
        <dbReference type="ChEBI" id="CHEBI:58087"/>
        <dbReference type="EC" id="3.5.1.18"/>
    </reaction>
</comment>
<comment type="cofactor">
    <cofactor evidence="1">
        <name>Zn(2+)</name>
        <dbReference type="ChEBI" id="CHEBI:29105"/>
    </cofactor>
    <cofactor evidence="1">
        <name>Co(2+)</name>
        <dbReference type="ChEBI" id="CHEBI:48828"/>
    </cofactor>
    <text evidence="1">Binds 2 Zn(2+) or Co(2+) ions per subunit.</text>
</comment>
<comment type="pathway">
    <text evidence="1">Amino-acid biosynthesis; L-lysine biosynthesis via DAP pathway; LL-2,6-diaminopimelate from (S)-tetrahydrodipicolinate (succinylase route): step 3/3.</text>
</comment>
<comment type="subunit">
    <text evidence="1">Homodimer.</text>
</comment>
<comment type="similarity">
    <text evidence="1">Belongs to the peptidase M20A family. DapE subfamily.</text>
</comment>
<proteinExistence type="inferred from homology"/>
<reference key="1">
    <citation type="journal article" date="2011" name="Appl. Environ. Microbiol.">
        <title>Genomic potential of Marinobacter aquaeolei, a biogeochemical 'opportunitroph'.</title>
        <authorList>
            <person name="Singer E."/>
            <person name="Webb E.A."/>
            <person name="Nelson W.C."/>
            <person name="Heidelberg J.F."/>
            <person name="Ivanova N."/>
            <person name="Pati A."/>
            <person name="Edwards K.J."/>
        </authorList>
    </citation>
    <scope>NUCLEOTIDE SEQUENCE [LARGE SCALE GENOMIC DNA]</scope>
    <source>
        <strain>ATCC 700491 / DSM 11845 / VT8</strain>
    </source>
</reference>
<accession>A1U3R0</accession>
<name>DAPE_MARN8</name>